<keyword id="KW-0025">Alternative splicing</keyword>
<keyword id="KW-0963">Cytoplasm</keyword>
<keyword id="KW-0472">Membrane</keyword>
<keyword id="KW-1185">Reference proteome</keyword>
<keyword id="KW-0812">Transmembrane</keyword>
<keyword id="KW-1133">Transmembrane helix</keyword>
<keyword id="KW-0043">Tumor suppressor</keyword>
<feature type="chain" id="PRO_0000317256" description="Transmembrane protein 196">
    <location>
        <begin position="1"/>
        <end position="178"/>
    </location>
</feature>
<feature type="transmembrane region" description="Helical" evidence="2">
    <location>
        <begin position="11"/>
        <end position="31"/>
    </location>
</feature>
<feature type="transmembrane region" description="Helical" evidence="2">
    <location>
        <begin position="47"/>
        <end position="67"/>
    </location>
</feature>
<feature type="transmembrane region" description="Helical" evidence="2">
    <location>
        <begin position="73"/>
        <end position="93"/>
    </location>
</feature>
<feature type="transmembrane region" description="Helical" evidence="2">
    <location>
        <begin position="106"/>
        <end position="126"/>
    </location>
</feature>
<feature type="splice variant" id="VSP_030928" description="In isoform 2 and isoform 3." evidence="5 6">
    <location>
        <begin position="1"/>
        <end position="74"/>
    </location>
</feature>
<feature type="splice variant" id="VSP_039208" description="In isoform 4." evidence="6">
    <location>
        <begin position="50"/>
        <end position="55"/>
    </location>
</feature>
<feature type="splice variant" id="VSP_030929" description="In isoform 3." evidence="5">
    <original>EITDNMSNGGPQLIFNGRV</original>
    <variation>IEGY</variation>
    <location>
        <begin position="160"/>
        <end position="178"/>
    </location>
</feature>
<feature type="sequence conflict" description="In Ref. 1; BX648384." evidence="7" ref="1">
    <original>E</original>
    <variation>G</variation>
    <location>
        <position position="158"/>
    </location>
</feature>
<gene>
    <name type="primary">TMEM196</name>
</gene>
<evidence type="ECO:0000250" key="1">
    <source>
        <dbReference type="UniProtKB" id="D3YWQ9"/>
    </source>
</evidence>
<evidence type="ECO:0000255" key="2"/>
<evidence type="ECO:0000269" key="3">
    <source>
    </source>
</evidence>
<evidence type="ECO:0000269" key="4">
    <source>
    </source>
</evidence>
<evidence type="ECO:0000303" key="5">
    <source>
    </source>
</evidence>
<evidence type="ECO:0000303" key="6">
    <source>
    </source>
</evidence>
<evidence type="ECO:0000305" key="7"/>
<dbReference type="EMBL" id="BX647256">
    <property type="protein sequence ID" value="CAI46055.1"/>
    <property type="molecule type" value="mRNA"/>
</dbReference>
<dbReference type="EMBL" id="BX648384">
    <property type="status" value="NOT_ANNOTATED_CDS"/>
    <property type="molecule type" value="mRNA"/>
</dbReference>
<dbReference type="EMBL" id="AC004543">
    <property type="status" value="NOT_ANNOTATED_CDS"/>
    <property type="molecule type" value="Genomic_DNA"/>
</dbReference>
<dbReference type="EMBL" id="CH471073">
    <property type="protein sequence ID" value="EAW93715.1"/>
    <property type="molecule type" value="Genomic_DNA"/>
</dbReference>
<dbReference type="EMBL" id="CH471073">
    <property type="protein sequence ID" value="EAW93716.1"/>
    <property type="molecule type" value="Genomic_DNA"/>
</dbReference>
<dbReference type="EMBL" id="BC030104">
    <property type="protein sequence ID" value="AAH30104.1"/>
    <property type="molecule type" value="mRNA"/>
</dbReference>
<dbReference type="CCDS" id="CCDS34607.2">
    <molecule id="Q5HYL7-4"/>
</dbReference>
<dbReference type="CCDS" id="CCDS94060.1">
    <molecule id="Q5HYL7-2"/>
</dbReference>
<dbReference type="RefSeq" id="NP_001353555.1">
    <molecule id="Q5HYL7-1"/>
    <property type="nucleotide sequence ID" value="NM_001366626.1"/>
</dbReference>
<dbReference type="RefSeq" id="NP_001353557.1">
    <molecule id="Q5HYL7-2"/>
    <property type="nucleotide sequence ID" value="NM_001366628.1"/>
</dbReference>
<dbReference type="RefSeq" id="NP_689987.3">
    <molecule id="Q5HYL7-4"/>
    <property type="nucleotide sequence ID" value="NM_152774.3"/>
</dbReference>
<dbReference type="RefSeq" id="XP_011513552.1">
    <property type="nucleotide sequence ID" value="XM_011515250.2"/>
</dbReference>
<dbReference type="SMR" id="Q5HYL7"/>
<dbReference type="BioGRID" id="129140">
    <property type="interactions" value="8"/>
</dbReference>
<dbReference type="FunCoup" id="Q5HYL7">
    <property type="interactions" value="16"/>
</dbReference>
<dbReference type="IntAct" id="Q5HYL7">
    <property type="interactions" value="7"/>
</dbReference>
<dbReference type="STRING" id="9606.ENSP00000385087"/>
<dbReference type="iPTMnet" id="Q5HYL7"/>
<dbReference type="PhosphoSitePlus" id="Q5HYL7"/>
<dbReference type="BioMuta" id="TMEM196"/>
<dbReference type="DMDM" id="166988175"/>
<dbReference type="PaxDb" id="9606-ENSP00000384234"/>
<dbReference type="Antibodypedia" id="52300">
    <property type="antibodies" value="31 antibodies from 9 providers"/>
</dbReference>
<dbReference type="DNASU" id="256130"/>
<dbReference type="Ensembl" id="ENST00000405764.7">
    <molecule id="Q5HYL7-4"/>
    <property type="protein sequence ID" value="ENSP00000384234.3"/>
    <property type="gene ID" value="ENSG00000173452.15"/>
</dbReference>
<dbReference type="Ensembl" id="ENST00000493519.2">
    <molecule id="Q5HYL7-2"/>
    <property type="protein sequence ID" value="ENSP00000438368.1"/>
    <property type="gene ID" value="ENSG00000173452.15"/>
</dbReference>
<dbReference type="GeneID" id="256130"/>
<dbReference type="KEGG" id="hsa:256130"/>
<dbReference type="UCSC" id="uc011jyg.3">
    <molecule id="Q5HYL7-1"/>
    <property type="organism name" value="human"/>
</dbReference>
<dbReference type="AGR" id="HGNC:22431"/>
<dbReference type="CTD" id="256130"/>
<dbReference type="DisGeNET" id="256130"/>
<dbReference type="GeneCards" id="TMEM196"/>
<dbReference type="HGNC" id="HGNC:22431">
    <property type="gene designation" value="TMEM196"/>
</dbReference>
<dbReference type="HPA" id="ENSG00000173452">
    <property type="expression patterns" value="Tissue enhanced (brain, retina)"/>
</dbReference>
<dbReference type="neXtProt" id="NX_Q5HYL7"/>
<dbReference type="OpenTargets" id="ENSG00000173452"/>
<dbReference type="PharmGKB" id="PA162406335"/>
<dbReference type="VEuPathDB" id="HostDB:ENSG00000173452"/>
<dbReference type="eggNOG" id="ENOG502RXKV">
    <property type="taxonomic scope" value="Eukaryota"/>
</dbReference>
<dbReference type="GeneTree" id="ENSGT00940000163002"/>
<dbReference type="HOGENOM" id="CLU_2249253_0_0_1"/>
<dbReference type="InParanoid" id="Q5HYL7"/>
<dbReference type="OrthoDB" id="10016951at2759"/>
<dbReference type="PAN-GO" id="Q5HYL7">
    <property type="GO annotations" value="0 GO annotations based on evolutionary models"/>
</dbReference>
<dbReference type="PhylomeDB" id="Q5HYL7"/>
<dbReference type="TreeFam" id="TF332520"/>
<dbReference type="PathwayCommons" id="Q5HYL7"/>
<dbReference type="SignaLink" id="Q5HYL7"/>
<dbReference type="BioGRID-ORCS" id="256130">
    <property type="hits" value="12 hits in 1141 CRISPR screens"/>
</dbReference>
<dbReference type="GenomeRNAi" id="256130"/>
<dbReference type="Pharos" id="Q5HYL7">
    <property type="development level" value="Tdark"/>
</dbReference>
<dbReference type="PRO" id="PR:Q5HYL7"/>
<dbReference type="Proteomes" id="UP000005640">
    <property type="component" value="Chromosome 7"/>
</dbReference>
<dbReference type="RNAct" id="Q5HYL7">
    <property type="molecule type" value="protein"/>
</dbReference>
<dbReference type="Bgee" id="ENSG00000173452">
    <property type="expression patterns" value="Expressed in synovial joint and 73 other cell types or tissues"/>
</dbReference>
<dbReference type="ExpressionAtlas" id="Q5HYL7">
    <property type="expression patterns" value="baseline and differential"/>
</dbReference>
<dbReference type="GO" id="GO:0005737">
    <property type="term" value="C:cytoplasm"/>
    <property type="evidence" value="ECO:0000314"/>
    <property type="project" value="UniProtKB"/>
</dbReference>
<dbReference type="GO" id="GO:0016020">
    <property type="term" value="C:membrane"/>
    <property type="evidence" value="ECO:0007669"/>
    <property type="project" value="UniProtKB-SubCell"/>
</dbReference>
<dbReference type="GO" id="GO:0090090">
    <property type="term" value="P:negative regulation of canonical Wnt signaling pathway"/>
    <property type="evidence" value="ECO:0000250"/>
    <property type="project" value="UniProtKB"/>
</dbReference>
<dbReference type="GO" id="GO:0030308">
    <property type="term" value="P:negative regulation of cell growth"/>
    <property type="evidence" value="ECO:0000314"/>
    <property type="project" value="UniProtKB"/>
</dbReference>
<dbReference type="GO" id="GO:0030336">
    <property type="term" value="P:negative regulation of cell migration"/>
    <property type="evidence" value="ECO:0000314"/>
    <property type="project" value="UniProtKB"/>
</dbReference>
<dbReference type="GO" id="GO:0008285">
    <property type="term" value="P:negative regulation of cell population proliferation"/>
    <property type="evidence" value="ECO:0000315"/>
    <property type="project" value="UniProtKB"/>
</dbReference>
<dbReference type="GO" id="GO:0043065">
    <property type="term" value="P:positive regulation of apoptotic process"/>
    <property type="evidence" value="ECO:0000314"/>
    <property type="project" value="UniProtKB"/>
</dbReference>
<dbReference type="InterPro" id="IPR037661">
    <property type="entry name" value="TMEM196"/>
</dbReference>
<dbReference type="PANTHER" id="PTHR28681">
    <property type="entry name" value="TRANSMEMBRANE PROTEIN 196"/>
    <property type="match status" value="1"/>
</dbReference>
<dbReference type="PANTHER" id="PTHR28681:SF1">
    <property type="entry name" value="TRANSMEMBRANE PROTEIN 196"/>
    <property type="match status" value="1"/>
</dbReference>
<sequence length="178" mass="19025">MCTSGQIIGSLLVLSVLEIGLGVSSVAVGAVSFSLALREHKPQLGDSSPVWSGVCFLLCGICGILCAKKKSGLVMILFSACCICGLIGGILNFQFLRAVTKKTSSLYPLHLASMSLACIGIGGCTLSSWLTCRLASYEQRRMFSEREHSLHHSHEMAEKEITDNMSNGGPQLIFNGRV</sequence>
<accession>Q5HYL7</accession>
<accession>Q8N6I6</accession>
<reference key="1">
    <citation type="journal article" date="2007" name="BMC Genomics">
        <title>The full-ORF clone resource of the German cDNA consortium.</title>
        <authorList>
            <person name="Bechtel S."/>
            <person name="Rosenfelder H."/>
            <person name="Duda A."/>
            <person name="Schmidt C.P."/>
            <person name="Ernst U."/>
            <person name="Wellenreuther R."/>
            <person name="Mehrle A."/>
            <person name="Schuster C."/>
            <person name="Bahr A."/>
            <person name="Bloecker H."/>
            <person name="Heubner D."/>
            <person name="Hoerlein A."/>
            <person name="Michel G."/>
            <person name="Wedler H."/>
            <person name="Koehrer K."/>
            <person name="Ottenwaelder B."/>
            <person name="Poustka A."/>
            <person name="Wiemann S."/>
            <person name="Schupp I."/>
        </authorList>
    </citation>
    <scope>NUCLEOTIDE SEQUENCE [LARGE SCALE MRNA] (ISOFORMS 2 AND 4)</scope>
    <source>
        <tissue>Endometrium</tissue>
    </source>
</reference>
<reference key="2">
    <citation type="journal article" date="2003" name="Nature">
        <title>The DNA sequence of human chromosome 7.</title>
        <authorList>
            <person name="Hillier L.W."/>
            <person name="Fulton R.S."/>
            <person name="Fulton L.A."/>
            <person name="Graves T.A."/>
            <person name="Pepin K.H."/>
            <person name="Wagner-McPherson C."/>
            <person name="Layman D."/>
            <person name="Maas J."/>
            <person name="Jaeger S."/>
            <person name="Walker R."/>
            <person name="Wylie K."/>
            <person name="Sekhon M."/>
            <person name="Becker M.C."/>
            <person name="O'Laughlin M.D."/>
            <person name="Schaller M.E."/>
            <person name="Fewell G.A."/>
            <person name="Delehaunty K.D."/>
            <person name="Miner T.L."/>
            <person name="Nash W.E."/>
            <person name="Cordes M."/>
            <person name="Du H."/>
            <person name="Sun H."/>
            <person name="Edwards J."/>
            <person name="Bradshaw-Cordum H."/>
            <person name="Ali J."/>
            <person name="Andrews S."/>
            <person name="Isak A."/>
            <person name="Vanbrunt A."/>
            <person name="Nguyen C."/>
            <person name="Du F."/>
            <person name="Lamar B."/>
            <person name="Courtney L."/>
            <person name="Kalicki J."/>
            <person name="Ozersky P."/>
            <person name="Bielicki L."/>
            <person name="Scott K."/>
            <person name="Holmes A."/>
            <person name="Harkins R."/>
            <person name="Harris A."/>
            <person name="Strong C.M."/>
            <person name="Hou S."/>
            <person name="Tomlinson C."/>
            <person name="Dauphin-Kohlberg S."/>
            <person name="Kozlowicz-Reilly A."/>
            <person name="Leonard S."/>
            <person name="Rohlfing T."/>
            <person name="Rock S.M."/>
            <person name="Tin-Wollam A.-M."/>
            <person name="Abbott A."/>
            <person name="Minx P."/>
            <person name="Maupin R."/>
            <person name="Strowmatt C."/>
            <person name="Latreille P."/>
            <person name="Miller N."/>
            <person name="Johnson D."/>
            <person name="Murray J."/>
            <person name="Woessner J.P."/>
            <person name="Wendl M.C."/>
            <person name="Yang S.-P."/>
            <person name="Schultz B.R."/>
            <person name="Wallis J.W."/>
            <person name="Spieth J."/>
            <person name="Bieri T.A."/>
            <person name="Nelson J.O."/>
            <person name="Berkowicz N."/>
            <person name="Wohldmann P.E."/>
            <person name="Cook L.L."/>
            <person name="Hickenbotham M.T."/>
            <person name="Eldred J."/>
            <person name="Williams D."/>
            <person name="Bedell J.A."/>
            <person name="Mardis E.R."/>
            <person name="Clifton S.W."/>
            <person name="Chissoe S.L."/>
            <person name="Marra M.A."/>
            <person name="Raymond C."/>
            <person name="Haugen E."/>
            <person name="Gillett W."/>
            <person name="Zhou Y."/>
            <person name="James R."/>
            <person name="Phelps K."/>
            <person name="Iadanoto S."/>
            <person name="Bubb K."/>
            <person name="Simms E."/>
            <person name="Levy R."/>
            <person name="Clendenning J."/>
            <person name="Kaul R."/>
            <person name="Kent W.J."/>
            <person name="Furey T.S."/>
            <person name="Baertsch R.A."/>
            <person name="Brent M.R."/>
            <person name="Keibler E."/>
            <person name="Flicek P."/>
            <person name="Bork P."/>
            <person name="Suyama M."/>
            <person name="Bailey J.A."/>
            <person name="Portnoy M.E."/>
            <person name="Torrents D."/>
            <person name="Chinwalla A.T."/>
            <person name="Gish W.R."/>
            <person name="Eddy S.R."/>
            <person name="McPherson J.D."/>
            <person name="Olson M.V."/>
            <person name="Eichler E.E."/>
            <person name="Green E.D."/>
            <person name="Waterston R.H."/>
            <person name="Wilson R.K."/>
        </authorList>
    </citation>
    <scope>NUCLEOTIDE SEQUENCE [LARGE SCALE GENOMIC DNA]</scope>
</reference>
<reference key="3">
    <citation type="submission" date="2005-07" db="EMBL/GenBank/DDBJ databases">
        <authorList>
            <person name="Mural R.J."/>
            <person name="Istrail S."/>
            <person name="Sutton G.G."/>
            <person name="Florea L."/>
            <person name="Halpern A.L."/>
            <person name="Mobarry C.M."/>
            <person name="Lippert R."/>
            <person name="Walenz B."/>
            <person name="Shatkay H."/>
            <person name="Dew I."/>
            <person name="Miller J.R."/>
            <person name="Flanigan M.J."/>
            <person name="Edwards N.J."/>
            <person name="Bolanos R."/>
            <person name="Fasulo D."/>
            <person name="Halldorsson B.V."/>
            <person name="Hannenhalli S."/>
            <person name="Turner R."/>
            <person name="Yooseph S."/>
            <person name="Lu F."/>
            <person name="Nusskern D.R."/>
            <person name="Shue B.C."/>
            <person name="Zheng X.H."/>
            <person name="Zhong F."/>
            <person name="Delcher A.L."/>
            <person name="Huson D.H."/>
            <person name="Kravitz S.A."/>
            <person name="Mouchard L."/>
            <person name="Reinert K."/>
            <person name="Remington K.A."/>
            <person name="Clark A.G."/>
            <person name="Waterman M.S."/>
            <person name="Eichler E.E."/>
            <person name="Adams M.D."/>
            <person name="Hunkapiller M.W."/>
            <person name="Myers E.W."/>
            <person name="Venter J.C."/>
        </authorList>
    </citation>
    <scope>NUCLEOTIDE SEQUENCE [LARGE SCALE GENOMIC DNA]</scope>
</reference>
<reference key="4">
    <citation type="journal article" date="2004" name="Genome Res.">
        <title>The status, quality, and expansion of the NIH full-length cDNA project: the Mammalian Gene Collection (MGC).</title>
        <authorList>
            <consortium name="The MGC Project Team"/>
        </authorList>
    </citation>
    <scope>NUCLEOTIDE SEQUENCE [LARGE SCALE MRNA] (ISOFORM 3)</scope>
    <source>
        <tissue>Brain</tissue>
    </source>
</reference>
<reference key="5">
    <citation type="journal article" date="2015" name="Oncotarget">
        <title>TMEM196 acts as a novel functional tumour suppressor inactivated by DNA methylation and is a potential prognostic biomarker in lung cancer.</title>
        <authorList>
            <person name="Liu W.B."/>
            <person name="Han F."/>
            <person name="Jiang X."/>
            <person name="Chen H.Q."/>
            <person name="Zhao H."/>
            <person name="Liu Y."/>
            <person name="Li Y.H."/>
            <person name="Huang C."/>
            <person name="Cao J."/>
            <person name="Liu J.Y."/>
        </authorList>
    </citation>
    <scope>FUNCTION</scope>
</reference>
<reference key="6">
    <citation type="journal article" date="2023" name="J. Cancer Res. Clin. Oncol.">
        <title>TMEM196 inhibits lung cancer metastasis by regulating the Wnt/beta-catenin signaling pathway.</title>
        <authorList>
            <person name="Chen J."/>
            <person name="Wang D."/>
            <person name="Chen H."/>
            <person name="Gu J."/>
            <person name="Jiang X."/>
            <person name="Han F."/>
            <person name="Cao J."/>
            <person name="Liu W."/>
            <person name="Liu J."/>
        </authorList>
    </citation>
    <scope>FUNCTION</scope>
    <scope>SUBCELLULAR LOCATION</scope>
    <scope>TISSUE SPECIFICITY</scope>
</reference>
<organism>
    <name type="scientific">Homo sapiens</name>
    <name type="common">Human</name>
    <dbReference type="NCBI Taxonomy" id="9606"/>
    <lineage>
        <taxon>Eukaryota</taxon>
        <taxon>Metazoa</taxon>
        <taxon>Chordata</taxon>
        <taxon>Craniata</taxon>
        <taxon>Vertebrata</taxon>
        <taxon>Euteleostomi</taxon>
        <taxon>Mammalia</taxon>
        <taxon>Eutheria</taxon>
        <taxon>Euarchontoglires</taxon>
        <taxon>Primates</taxon>
        <taxon>Haplorrhini</taxon>
        <taxon>Catarrhini</taxon>
        <taxon>Hominidae</taxon>
        <taxon>Homo</taxon>
    </lineage>
</organism>
<comment type="function">
    <text evidence="1 3 4">Acts as a tumor suppressor in lung cancer (PubMed:26056045, PubMed:36355209). Inhibits tumor cell growth by inhibiting cell proliferation and migration and promoting cell apoptosis (PubMed:26056045, PubMed:36355209). Inhibits metastasis of lung cancer by suppressing beta-catenin expression in the Wnt/beta-catenin signaling pathway (By similarity).</text>
</comment>
<comment type="interaction">
    <interactant intactId="EBI-12822537">
        <id>Q5HYL7-3</id>
    </interactant>
    <interactant intactId="EBI-741171">
        <id>Q96AL5</id>
        <label>PBX3</label>
    </interactant>
    <organismsDiffer>false</organismsDiffer>
    <experiments>3</experiments>
</comment>
<comment type="subcellular location">
    <subcellularLocation>
        <location evidence="4">Cytoplasm</location>
    </subcellularLocation>
    <subcellularLocation>
        <location evidence="2">Membrane</location>
        <topology evidence="2">Multi-pass membrane protein</topology>
    </subcellularLocation>
    <text evidence="4">Expressed in the cytoplasm in lung cancer cells.</text>
</comment>
<comment type="alternative products">
    <event type="alternative splicing"/>
    <isoform>
        <id>Q5HYL7-1</id>
        <name>1</name>
        <sequence type="displayed"/>
    </isoform>
    <isoform>
        <id>Q5HYL7-2</id>
        <name>2</name>
        <sequence type="described" ref="VSP_030928"/>
    </isoform>
    <isoform>
        <id>Q5HYL7-3</id>
        <name>3</name>
        <sequence type="described" ref="VSP_030928 VSP_030929"/>
    </isoform>
    <isoform>
        <id>Q5HYL7-4</id>
        <name>4</name>
        <sequence type="described" ref="VSP_039208"/>
    </isoform>
</comment>
<comment type="tissue specificity">
    <text evidence="4">Expression is significantly decreased in lung cancer cells compared to normal lung tissue (at protein level).</text>
</comment>
<comment type="sequence caution" evidence="7">
    <conflict type="frameshift">
        <sequence resource="EMBL" id="BX648384"/>
    </conflict>
</comment>
<protein>
    <recommendedName>
        <fullName>Transmembrane protein 196</fullName>
    </recommendedName>
</protein>
<proteinExistence type="evidence at protein level"/>
<name>TM196_HUMAN</name>